<name>CH60_CLOBB</name>
<protein>
    <recommendedName>
        <fullName evidence="1">Chaperonin GroEL</fullName>
        <ecNumber evidence="1">5.6.1.7</ecNumber>
    </recommendedName>
    <alternativeName>
        <fullName evidence="1">60 kDa chaperonin</fullName>
    </alternativeName>
    <alternativeName>
        <fullName evidence="1">Chaperonin-60</fullName>
        <shortName evidence="1">Cpn60</shortName>
    </alternativeName>
</protein>
<reference key="1">
    <citation type="submission" date="2008-04" db="EMBL/GenBank/DDBJ databases">
        <title>Complete sequence of Clostridium botulinum strain Eklund.</title>
        <authorList>
            <person name="Brinkac L.M."/>
            <person name="Brown J.L."/>
            <person name="Bruce D."/>
            <person name="Detter C."/>
            <person name="Munk C."/>
            <person name="Smith L.A."/>
            <person name="Smith T.J."/>
            <person name="Sutton G."/>
            <person name="Brettin T.S."/>
        </authorList>
    </citation>
    <scope>NUCLEOTIDE SEQUENCE [LARGE SCALE GENOMIC DNA]</scope>
    <source>
        <strain>Eklund 17B / Type B</strain>
    </source>
</reference>
<gene>
    <name evidence="1" type="primary">groEL</name>
    <name evidence="1" type="synonym">groL</name>
    <name type="ordered locus">CLL_A0386</name>
</gene>
<dbReference type="EC" id="5.6.1.7" evidence="1"/>
<dbReference type="EMBL" id="CP001056">
    <property type="protein sequence ID" value="ACD22086.1"/>
    <property type="molecule type" value="Genomic_DNA"/>
</dbReference>
<dbReference type="SMR" id="B2TIX0"/>
<dbReference type="KEGG" id="cbk:CLL_A0386"/>
<dbReference type="PATRIC" id="fig|935198.13.peg.362"/>
<dbReference type="HOGENOM" id="CLU_016503_3_0_9"/>
<dbReference type="Proteomes" id="UP000001195">
    <property type="component" value="Chromosome"/>
</dbReference>
<dbReference type="GO" id="GO:0005737">
    <property type="term" value="C:cytoplasm"/>
    <property type="evidence" value="ECO:0007669"/>
    <property type="project" value="UniProtKB-SubCell"/>
</dbReference>
<dbReference type="GO" id="GO:0005524">
    <property type="term" value="F:ATP binding"/>
    <property type="evidence" value="ECO:0007669"/>
    <property type="project" value="UniProtKB-UniRule"/>
</dbReference>
<dbReference type="GO" id="GO:0140662">
    <property type="term" value="F:ATP-dependent protein folding chaperone"/>
    <property type="evidence" value="ECO:0007669"/>
    <property type="project" value="InterPro"/>
</dbReference>
<dbReference type="GO" id="GO:0016853">
    <property type="term" value="F:isomerase activity"/>
    <property type="evidence" value="ECO:0007669"/>
    <property type="project" value="UniProtKB-KW"/>
</dbReference>
<dbReference type="GO" id="GO:0051082">
    <property type="term" value="F:unfolded protein binding"/>
    <property type="evidence" value="ECO:0007669"/>
    <property type="project" value="UniProtKB-UniRule"/>
</dbReference>
<dbReference type="GO" id="GO:0042026">
    <property type="term" value="P:protein refolding"/>
    <property type="evidence" value="ECO:0007669"/>
    <property type="project" value="UniProtKB-UniRule"/>
</dbReference>
<dbReference type="CDD" id="cd03344">
    <property type="entry name" value="GroEL"/>
    <property type="match status" value="1"/>
</dbReference>
<dbReference type="FunFam" id="1.10.560.10:FF:000001">
    <property type="entry name" value="60 kDa chaperonin"/>
    <property type="match status" value="1"/>
</dbReference>
<dbReference type="FunFam" id="3.50.7.10:FF:000001">
    <property type="entry name" value="60 kDa chaperonin"/>
    <property type="match status" value="1"/>
</dbReference>
<dbReference type="Gene3D" id="3.50.7.10">
    <property type="entry name" value="GroEL"/>
    <property type="match status" value="1"/>
</dbReference>
<dbReference type="Gene3D" id="1.10.560.10">
    <property type="entry name" value="GroEL-like equatorial domain"/>
    <property type="match status" value="1"/>
</dbReference>
<dbReference type="Gene3D" id="3.30.260.10">
    <property type="entry name" value="TCP-1-like chaperonin intermediate domain"/>
    <property type="match status" value="1"/>
</dbReference>
<dbReference type="HAMAP" id="MF_00600">
    <property type="entry name" value="CH60"/>
    <property type="match status" value="1"/>
</dbReference>
<dbReference type="InterPro" id="IPR018370">
    <property type="entry name" value="Chaperonin_Cpn60_CS"/>
</dbReference>
<dbReference type="InterPro" id="IPR001844">
    <property type="entry name" value="Cpn60/GroEL"/>
</dbReference>
<dbReference type="InterPro" id="IPR002423">
    <property type="entry name" value="Cpn60/GroEL/TCP-1"/>
</dbReference>
<dbReference type="InterPro" id="IPR027409">
    <property type="entry name" value="GroEL-like_apical_dom_sf"/>
</dbReference>
<dbReference type="InterPro" id="IPR027413">
    <property type="entry name" value="GROEL-like_equatorial_sf"/>
</dbReference>
<dbReference type="InterPro" id="IPR027410">
    <property type="entry name" value="TCP-1-like_intermed_sf"/>
</dbReference>
<dbReference type="NCBIfam" id="TIGR02348">
    <property type="entry name" value="GroEL"/>
    <property type="match status" value="1"/>
</dbReference>
<dbReference type="NCBIfam" id="NF000592">
    <property type="entry name" value="PRK00013.1"/>
    <property type="match status" value="1"/>
</dbReference>
<dbReference type="NCBIfam" id="NF009487">
    <property type="entry name" value="PRK12849.1"/>
    <property type="match status" value="1"/>
</dbReference>
<dbReference type="NCBIfam" id="NF009488">
    <property type="entry name" value="PRK12850.1"/>
    <property type="match status" value="1"/>
</dbReference>
<dbReference type="NCBIfam" id="NF009489">
    <property type="entry name" value="PRK12851.1"/>
    <property type="match status" value="1"/>
</dbReference>
<dbReference type="PANTHER" id="PTHR45633">
    <property type="entry name" value="60 KDA HEAT SHOCK PROTEIN, MITOCHONDRIAL"/>
    <property type="match status" value="1"/>
</dbReference>
<dbReference type="Pfam" id="PF00118">
    <property type="entry name" value="Cpn60_TCP1"/>
    <property type="match status" value="1"/>
</dbReference>
<dbReference type="PRINTS" id="PR00298">
    <property type="entry name" value="CHAPERONIN60"/>
</dbReference>
<dbReference type="SUPFAM" id="SSF52029">
    <property type="entry name" value="GroEL apical domain-like"/>
    <property type="match status" value="1"/>
</dbReference>
<dbReference type="SUPFAM" id="SSF48592">
    <property type="entry name" value="GroEL equatorial domain-like"/>
    <property type="match status" value="1"/>
</dbReference>
<dbReference type="SUPFAM" id="SSF54849">
    <property type="entry name" value="GroEL-intermediate domain like"/>
    <property type="match status" value="1"/>
</dbReference>
<dbReference type="PROSITE" id="PS00296">
    <property type="entry name" value="CHAPERONINS_CPN60"/>
    <property type="match status" value="1"/>
</dbReference>
<organism>
    <name type="scientific">Clostridium botulinum (strain Eklund 17B / Type B)</name>
    <dbReference type="NCBI Taxonomy" id="935198"/>
    <lineage>
        <taxon>Bacteria</taxon>
        <taxon>Bacillati</taxon>
        <taxon>Bacillota</taxon>
        <taxon>Clostridia</taxon>
        <taxon>Eubacteriales</taxon>
        <taxon>Clostridiaceae</taxon>
        <taxon>Clostridium</taxon>
    </lineage>
</organism>
<accession>B2TIX0</accession>
<comment type="function">
    <text evidence="1">Together with its co-chaperonin GroES, plays an essential role in assisting protein folding. The GroEL-GroES system forms a nano-cage that allows encapsulation of the non-native substrate proteins and provides a physical environment optimized to promote and accelerate protein folding.</text>
</comment>
<comment type="catalytic activity">
    <reaction evidence="1">
        <text>ATP + H2O + a folded polypeptide = ADP + phosphate + an unfolded polypeptide.</text>
        <dbReference type="EC" id="5.6.1.7"/>
    </reaction>
</comment>
<comment type="subunit">
    <text evidence="1">Forms a cylinder of 14 subunits composed of two heptameric rings stacked back-to-back. Interacts with the co-chaperonin GroES.</text>
</comment>
<comment type="subcellular location">
    <subcellularLocation>
        <location evidence="1">Cytoplasm</location>
    </subcellularLocation>
</comment>
<comment type="similarity">
    <text evidence="1">Belongs to the chaperonin (HSP60) family.</text>
</comment>
<evidence type="ECO:0000255" key="1">
    <source>
        <dbReference type="HAMAP-Rule" id="MF_00600"/>
    </source>
</evidence>
<sequence length="540" mass="57935">MAKMLKFGEDARRSMQVGVDKLADTVKVTLGPKGRNVVLDKKFGSPLITNDGVSIAREIELEDPYENMGAQLVKEVATKTNDVAGDGTTTATLLAQAIIREGLKNVTAGANPMLIRNGIRMAVDKAVEEIKKISKPVEGKEDIARVAAISAADEEIGKLIADAMEKVGNEGVITIEESKSMGTELDVVEGMQFDRGYVSPYMSTDTEKMEAILDTPYILITDKKITNIQEILPILEQIVQAGRKLLIIAEDIEGEAMATLVVNKLRGTFTCVAVKAPGFGDRRKEMLEDIAILTGGTVIAEELGRDLKEVTLDMLGQAESVKVSKDNTVVVNGKGNPENIKDRISQIKAQIEETSSEFDKEKLQERLAKLAGGVAVIKVGAATETELKERKLRIEDALAATKAAVEEGIVPGGGTAYINVIKEVEKLTSDVQDTELGIKIIVKSLEEPLRQIASNAGVEGSVIIEKVKNSEVGTGYDALYGKYVNMIKSGIVDPTKVTRSALQNAASVSATFLTTEAAVAEIPQKEPAMPAPGMGMDGMY</sequence>
<keyword id="KW-0067">ATP-binding</keyword>
<keyword id="KW-0143">Chaperone</keyword>
<keyword id="KW-0963">Cytoplasm</keyword>
<keyword id="KW-0413">Isomerase</keyword>
<keyword id="KW-0547">Nucleotide-binding</keyword>
<proteinExistence type="inferred from homology"/>
<feature type="chain" id="PRO_1000129993" description="Chaperonin GroEL">
    <location>
        <begin position="1"/>
        <end position="540"/>
    </location>
</feature>
<feature type="binding site" evidence="1">
    <location>
        <begin position="29"/>
        <end position="32"/>
    </location>
    <ligand>
        <name>ATP</name>
        <dbReference type="ChEBI" id="CHEBI:30616"/>
    </ligand>
</feature>
<feature type="binding site" evidence="1">
    <location>
        <begin position="86"/>
        <end position="90"/>
    </location>
    <ligand>
        <name>ATP</name>
        <dbReference type="ChEBI" id="CHEBI:30616"/>
    </ligand>
</feature>
<feature type="binding site" evidence="1">
    <location>
        <position position="413"/>
    </location>
    <ligand>
        <name>ATP</name>
        <dbReference type="ChEBI" id="CHEBI:30616"/>
    </ligand>
</feature>
<feature type="binding site" evidence="1">
    <location>
        <begin position="477"/>
        <end position="479"/>
    </location>
    <ligand>
        <name>ATP</name>
        <dbReference type="ChEBI" id="CHEBI:30616"/>
    </ligand>
</feature>
<feature type="binding site" evidence="1">
    <location>
        <position position="493"/>
    </location>
    <ligand>
        <name>ATP</name>
        <dbReference type="ChEBI" id="CHEBI:30616"/>
    </ligand>
</feature>